<dbReference type="EC" id="4.1.1.130" evidence="1"/>
<dbReference type="EMBL" id="CU928170">
    <property type="protein sequence ID" value="CAR24121.1"/>
    <property type="molecule type" value="Genomic_DNA"/>
</dbReference>
<dbReference type="RefSeq" id="XP_002554558.1">
    <property type="nucleotide sequence ID" value="XM_002554512.1"/>
</dbReference>
<dbReference type="SMR" id="C5DKX0"/>
<dbReference type="FunCoup" id="C5DKX0">
    <property type="interactions" value="554"/>
</dbReference>
<dbReference type="STRING" id="559295.C5DKX0"/>
<dbReference type="GeneID" id="8292764"/>
<dbReference type="KEGG" id="lth:KLTH0F08184g"/>
<dbReference type="eggNOG" id="KOG3244">
    <property type="taxonomic scope" value="Eukaryota"/>
</dbReference>
<dbReference type="HOGENOM" id="CLU_061241_0_2_1"/>
<dbReference type="InParanoid" id="C5DKX0"/>
<dbReference type="OMA" id="YYERHFH"/>
<dbReference type="OrthoDB" id="4249at2759"/>
<dbReference type="UniPathway" id="UPA00232"/>
<dbReference type="Proteomes" id="UP000002036">
    <property type="component" value="Chromosome F"/>
</dbReference>
<dbReference type="GO" id="GO:0031314">
    <property type="term" value="C:extrinsic component of mitochondrial inner membrane"/>
    <property type="evidence" value="ECO:0007669"/>
    <property type="project" value="UniProtKB-UniRule"/>
</dbReference>
<dbReference type="GO" id="GO:0006744">
    <property type="term" value="P:ubiquinone biosynthetic process"/>
    <property type="evidence" value="ECO:0007669"/>
    <property type="project" value="UniProtKB-UniRule"/>
</dbReference>
<dbReference type="HAMAP" id="MF_03111">
    <property type="entry name" value="Coq4"/>
    <property type="match status" value="1"/>
</dbReference>
<dbReference type="InterPro" id="IPR007715">
    <property type="entry name" value="Coq4"/>
</dbReference>
<dbReference type="InterPro" id="IPR027540">
    <property type="entry name" value="Coq4_euk"/>
</dbReference>
<dbReference type="PANTHER" id="PTHR12922">
    <property type="entry name" value="UBIQUINONE BIOSYNTHESIS PROTEIN"/>
    <property type="match status" value="1"/>
</dbReference>
<dbReference type="PANTHER" id="PTHR12922:SF7">
    <property type="entry name" value="UBIQUINONE BIOSYNTHESIS PROTEIN COQ4 HOMOLOG, MITOCHONDRIAL"/>
    <property type="match status" value="1"/>
</dbReference>
<dbReference type="Pfam" id="PF05019">
    <property type="entry name" value="Coq4"/>
    <property type="match status" value="1"/>
</dbReference>
<evidence type="ECO:0000255" key="1">
    <source>
        <dbReference type="HAMAP-Rule" id="MF_03111"/>
    </source>
</evidence>
<organism>
    <name type="scientific">Lachancea thermotolerans (strain ATCC 56472 / CBS 6340 / NRRL Y-8284)</name>
    <name type="common">Yeast</name>
    <name type="synonym">Kluyveromyces thermotolerans</name>
    <dbReference type="NCBI Taxonomy" id="559295"/>
    <lineage>
        <taxon>Eukaryota</taxon>
        <taxon>Fungi</taxon>
        <taxon>Dikarya</taxon>
        <taxon>Ascomycota</taxon>
        <taxon>Saccharomycotina</taxon>
        <taxon>Saccharomycetes</taxon>
        <taxon>Saccharomycetales</taxon>
        <taxon>Saccharomycetaceae</taxon>
        <taxon>Lachancea</taxon>
    </lineage>
</organism>
<gene>
    <name evidence="1" type="primary">COQ4</name>
    <name type="ordered locus">KLTH0F08184g</name>
</gene>
<keyword id="KW-0456">Lyase</keyword>
<keyword id="KW-0472">Membrane</keyword>
<keyword id="KW-0479">Metal-binding</keyword>
<keyword id="KW-0496">Mitochondrion</keyword>
<keyword id="KW-0999">Mitochondrion inner membrane</keyword>
<keyword id="KW-1185">Reference proteome</keyword>
<keyword id="KW-0831">Ubiquinone biosynthesis</keyword>
<keyword id="KW-0862">Zinc</keyword>
<name>COQ4_LACTC</name>
<reference key="1">
    <citation type="journal article" date="2009" name="Genome Res.">
        <title>Comparative genomics of protoploid Saccharomycetaceae.</title>
        <authorList>
            <consortium name="The Genolevures Consortium"/>
            <person name="Souciet J.-L."/>
            <person name="Dujon B."/>
            <person name="Gaillardin C."/>
            <person name="Johnston M."/>
            <person name="Baret P.V."/>
            <person name="Cliften P."/>
            <person name="Sherman D.J."/>
            <person name="Weissenbach J."/>
            <person name="Westhof E."/>
            <person name="Wincker P."/>
            <person name="Jubin C."/>
            <person name="Poulain J."/>
            <person name="Barbe V."/>
            <person name="Segurens B."/>
            <person name="Artiguenave F."/>
            <person name="Anthouard V."/>
            <person name="Vacherie B."/>
            <person name="Val M.-E."/>
            <person name="Fulton R.S."/>
            <person name="Minx P."/>
            <person name="Wilson R."/>
            <person name="Durrens P."/>
            <person name="Jean G."/>
            <person name="Marck C."/>
            <person name="Martin T."/>
            <person name="Nikolski M."/>
            <person name="Rolland T."/>
            <person name="Seret M.-L."/>
            <person name="Casaregola S."/>
            <person name="Despons L."/>
            <person name="Fairhead C."/>
            <person name="Fischer G."/>
            <person name="Lafontaine I."/>
            <person name="Leh V."/>
            <person name="Lemaire M."/>
            <person name="de Montigny J."/>
            <person name="Neuveglise C."/>
            <person name="Thierry A."/>
            <person name="Blanc-Lenfle I."/>
            <person name="Bleykasten C."/>
            <person name="Diffels J."/>
            <person name="Fritsch E."/>
            <person name="Frangeul L."/>
            <person name="Goeffon A."/>
            <person name="Jauniaux N."/>
            <person name="Kachouri-Lafond R."/>
            <person name="Payen C."/>
            <person name="Potier S."/>
            <person name="Pribylova L."/>
            <person name="Ozanne C."/>
            <person name="Richard G.-F."/>
            <person name="Sacerdot C."/>
            <person name="Straub M.-L."/>
            <person name="Talla E."/>
        </authorList>
    </citation>
    <scope>NUCLEOTIDE SEQUENCE [LARGE SCALE GENOMIC DNA]</scope>
    <source>
        <strain>ATCC 56472 / CBS 6340 / NRRL Y-8284</strain>
    </source>
</reference>
<proteinExistence type="inferred from homology"/>
<accession>C5DKX0</accession>
<protein>
    <recommendedName>
        <fullName evidence="1">Ubiquinone biosynthesis protein COQ4, mitochondrial</fullName>
    </recommendedName>
    <alternativeName>
        <fullName>4-hydroxy-3-methoxy-5-polyprenylbenzoate decarboxylase</fullName>
        <ecNumber evidence="1">4.1.1.130</ecNumber>
    </alternativeName>
    <alternativeName>
        <fullName evidence="1">Coenzyme Q biosynthesis protein 4</fullName>
    </alternativeName>
</protein>
<feature type="chain" id="PRO_0000388117" description="Ubiquinone biosynthesis protein COQ4, mitochondrial">
    <location>
        <begin position="1"/>
        <end position="327"/>
    </location>
</feature>
<feature type="binding site" evidence="1">
    <location>
        <position position="208"/>
    </location>
    <ligand>
        <name>Zn(2+)</name>
        <dbReference type="ChEBI" id="CHEBI:29105"/>
    </ligand>
</feature>
<feature type="binding site" evidence="1">
    <location>
        <position position="209"/>
    </location>
    <ligand>
        <name>Zn(2+)</name>
        <dbReference type="ChEBI" id="CHEBI:29105"/>
    </ligand>
</feature>
<feature type="binding site" evidence="1">
    <location>
        <position position="212"/>
    </location>
    <ligand>
        <name>Zn(2+)</name>
        <dbReference type="ChEBI" id="CHEBI:29105"/>
    </ligand>
</feature>
<feature type="binding site" evidence="1">
    <location>
        <position position="224"/>
    </location>
    <ligand>
        <name>Zn(2+)</name>
        <dbReference type="ChEBI" id="CHEBI:29105"/>
    </ligand>
</feature>
<comment type="function">
    <text evidence="1">Lyase that catalyzes the C1-decarboxylation of 4-hydroxy-3-methoxy-5-(all-trans-polyprenyl)benzoic acid into 2-methoxy-6-(all-trans-polyprenyl)phenol during ubiquinone biosynthesis.</text>
</comment>
<comment type="catalytic activity">
    <reaction evidence="1">
        <text>a 4-hydroxy-3-methoxy-5-(all-trans-polyprenyl)benzoate + H(+) = a 2-methoxy-6-(all-trans-polyprenyl)phenol + CO2</text>
        <dbReference type="Rhea" id="RHEA:81179"/>
        <dbReference type="Rhea" id="RHEA-COMP:9551"/>
        <dbReference type="Rhea" id="RHEA-COMP:10931"/>
        <dbReference type="ChEBI" id="CHEBI:15378"/>
        <dbReference type="ChEBI" id="CHEBI:16526"/>
        <dbReference type="ChEBI" id="CHEBI:62731"/>
        <dbReference type="ChEBI" id="CHEBI:84443"/>
        <dbReference type="EC" id="4.1.1.130"/>
    </reaction>
</comment>
<comment type="cofactor">
    <cofactor evidence="1">
        <name>Zn(2+)</name>
        <dbReference type="ChEBI" id="CHEBI:29105"/>
    </cofactor>
</comment>
<comment type="pathway">
    <text evidence="1">Cofactor biosynthesis; ubiquinone biosynthesis.</text>
</comment>
<comment type="subunit">
    <text evidence="1">Component of a multi-subunit COQ enzyme complex, composed of at least COQ3, COQ4, COQ5, COQ6, COQ7 and COQ9.</text>
</comment>
<comment type="subcellular location">
    <subcellularLocation>
        <location evidence="1">Mitochondrion inner membrane</location>
        <topology evidence="1">Peripheral membrane protein</topology>
        <orientation evidence="1">Matrix side</orientation>
    </subcellularLocation>
</comment>
<comment type="miscellaneous">
    <text evidence="1">This protein may be expected to contain an N-terminal transit peptide but none has been predicted.</text>
</comment>
<comment type="similarity">
    <text evidence="1">Belongs to the COQ4 family.</text>
</comment>
<sequence length="327" mass="38006">MIRTSFKHSIETRNQLLHRRHFVVAAALTVGNFVFGRDARLADAMDNGELHNKNEDYKAKAEELKEQRLRSIANSRPMKPCYEGHVPLYPHERVLLFITSGLKSYFHPEDGENIVQLGEASAFTPFLERLKNTMLSDKTGRRILREQPDITSESLDMDRLKKMAPNTLGHSYYKWLIKEGVSPDTRAPVKYIDDPTHAYIFKRYRQCHDFYHAVNDLPIIIEGEIAVKALEAANIGVPMAALGALLAPLRLKPVQKKRLYDVYLPWAVRTGLSCEPLINVYWEELLEHDVEELRKKLRITPPPDLRAIRRERAQQRKQFKLKYERHE</sequence>